<accession>A1TC03</accession>
<evidence type="ECO:0000255" key="1">
    <source>
        <dbReference type="HAMAP-Rule" id="MF_00244"/>
    </source>
</evidence>
<comment type="function">
    <text evidence="1">Catalyzes the reversible adenylation of nicotinate mononucleotide (NaMN) to nicotinic acid adenine dinucleotide (NaAD).</text>
</comment>
<comment type="catalytic activity">
    <reaction evidence="1">
        <text>nicotinate beta-D-ribonucleotide + ATP + H(+) = deamido-NAD(+) + diphosphate</text>
        <dbReference type="Rhea" id="RHEA:22860"/>
        <dbReference type="ChEBI" id="CHEBI:15378"/>
        <dbReference type="ChEBI" id="CHEBI:30616"/>
        <dbReference type="ChEBI" id="CHEBI:33019"/>
        <dbReference type="ChEBI" id="CHEBI:57502"/>
        <dbReference type="ChEBI" id="CHEBI:58437"/>
        <dbReference type="EC" id="2.7.7.18"/>
    </reaction>
</comment>
<comment type="pathway">
    <text evidence="1">Cofactor biosynthesis; NAD(+) biosynthesis; deamido-NAD(+) from nicotinate D-ribonucleotide: step 1/1.</text>
</comment>
<comment type="similarity">
    <text evidence="1">Belongs to the NadD family.</text>
</comment>
<reference key="1">
    <citation type="submission" date="2006-12" db="EMBL/GenBank/DDBJ databases">
        <title>Complete sequence of Mycobacterium vanbaalenii PYR-1.</title>
        <authorList>
            <consortium name="US DOE Joint Genome Institute"/>
            <person name="Copeland A."/>
            <person name="Lucas S."/>
            <person name="Lapidus A."/>
            <person name="Barry K."/>
            <person name="Detter J.C."/>
            <person name="Glavina del Rio T."/>
            <person name="Hammon N."/>
            <person name="Israni S."/>
            <person name="Dalin E."/>
            <person name="Tice H."/>
            <person name="Pitluck S."/>
            <person name="Singan V."/>
            <person name="Schmutz J."/>
            <person name="Larimer F."/>
            <person name="Land M."/>
            <person name="Hauser L."/>
            <person name="Kyrpides N."/>
            <person name="Anderson I.J."/>
            <person name="Miller C."/>
            <person name="Richardson P."/>
        </authorList>
    </citation>
    <scope>NUCLEOTIDE SEQUENCE [LARGE SCALE GENOMIC DNA]</scope>
    <source>
        <strain>DSM 7251 / JCM 13017 / BCRC 16820 / KCTC 9966 / NRRL B-24157 / PYR-1</strain>
    </source>
</reference>
<organism>
    <name type="scientific">Mycolicibacterium vanbaalenii (strain DSM 7251 / JCM 13017 / BCRC 16820 / KCTC 9966 / NRRL B-24157 / PYR-1)</name>
    <name type="common">Mycobacterium vanbaalenii</name>
    <dbReference type="NCBI Taxonomy" id="350058"/>
    <lineage>
        <taxon>Bacteria</taxon>
        <taxon>Bacillati</taxon>
        <taxon>Actinomycetota</taxon>
        <taxon>Actinomycetes</taxon>
        <taxon>Mycobacteriales</taxon>
        <taxon>Mycobacteriaceae</taxon>
        <taxon>Mycolicibacterium</taxon>
    </lineage>
</organism>
<dbReference type="EC" id="2.7.7.18" evidence="1"/>
<dbReference type="EMBL" id="CP000511">
    <property type="protein sequence ID" value="ABM14703.1"/>
    <property type="molecule type" value="Genomic_DNA"/>
</dbReference>
<dbReference type="SMR" id="A1TC03"/>
<dbReference type="STRING" id="350058.Mvan_3926"/>
<dbReference type="KEGG" id="mva:Mvan_3926"/>
<dbReference type="eggNOG" id="COG1057">
    <property type="taxonomic scope" value="Bacteria"/>
</dbReference>
<dbReference type="HOGENOM" id="CLU_069765_1_1_11"/>
<dbReference type="UniPathway" id="UPA00253">
    <property type="reaction ID" value="UER00332"/>
</dbReference>
<dbReference type="Proteomes" id="UP000009159">
    <property type="component" value="Chromosome"/>
</dbReference>
<dbReference type="GO" id="GO:0005524">
    <property type="term" value="F:ATP binding"/>
    <property type="evidence" value="ECO:0007669"/>
    <property type="project" value="UniProtKB-KW"/>
</dbReference>
<dbReference type="GO" id="GO:0004515">
    <property type="term" value="F:nicotinate-nucleotide adenylyltransferase activity"/>
    <property type="evidence" value="ECO:0007669"/>
    <property type="project" value="UniProtKB-UniRule"/>
</dbReference>
<dbReference type="GO" id="GO:0009435">
    <property type="term" value="P:NAD biosynthetic process"/>
    <property type="evidence" value="ECO:0007669"/>
    <property type="project" value="UniProtKB-UniRule"/>
</dbReference>
<dbReference type="CDD" id="cd02165">
    <property type="entry name" value="NMNAT"/>
    <property type="match status" value="1"/>
</dbReference>
<dbReference type="FunFam" id="3.40.50.620:FF:000039">
    <property type="entry name" value="Probable nicotinate-nucleotide adenylyltransferase"/>
    <property type="match status" value="1"/>
</dbReference>
<dbReference type="Gene3D" id="3.40.50.620">
    <property type="entry name" value="HUPs"/>
    <property type="match status" value="1"/>
</dbReference>
<dbReference type="HAMAP" id="MF_00244">
    <property type="entry name" value="NaMN_adenylyltr"/>
    <property type="match status" value="1"/>
</dbReference>
<dbReference type="InterPro" id="IPR004821">
    <property type="entry name" value="Cyt_trans-like"/>
</dbReference>
<dbReference type="InterPro" id="IPR005248">
    <property type="entry name" value="NadD/NMNAT"/>
</dbReference>
<dbReference type="InterPro" id="IPR014729">
    <property type="entry name" value="Rossmann-like_a/b/a_fold"/>
</dbReference>
<dbReference type="NCBIfam" id="TIGR00125">
    <property type="entry name" value="cyt_tran_rel"/>
    <property type="match status" value="1"/>
</dbReference>
<dbReference type="NCBIfam" id="TIGR00482">
    <property type="entry name" value="nicotinate (nicotinamide) nucleotide adenylyltransferase"/>
    <property type="match status" value="1"/>
</dbReference>
<dbReference type="NCBIfam" id="NF000840">
    <property type="entry name" value="PRK00071.1-3"/>
    <property type="match status" value="1"/>
</dbReference>
<dbReference type="PANTHER" id="PTHR39321">
    <property type="entry name" value="NICOTINATE-NUCLEOTIDE ADENYLYLTRANSFERASE-RELATED"/>
    <property type="match status" value="1"/>
</dbReference>
<dbReference type="PANTHER" id="PTHR39321:SF3">
    <property type="entry name" value="PHOSPHOPANTETHEINE ADENYLYLTRANSFERASE"/>
    <property type="match status" value="1"/>
</dbReference>
<dbReference type="Pfam" id="PF01467">
    <property type="entry name" value="CTP_transf_like"/>
    <property type="match status" value="1"/>
</dbReference>
<dbReference type="SUPFAM" id="SSF52374">
    <property type="entry name" value="Nucleotidylyl transferase"/>
    <property type="match status" value="1"/>
</dbReference>
<sequence length="214" mass="23761">MQAGGRRQRRLGVMGGTFDPIHNGHLVAASEVADRFDLDEVVFVPTGQPWQKRARAVTAAEDRYLMTVIATASNPRFTVSRVDIDRGGATYTKDTLRDLRAQNPDADLFFITGADALASILSWQNWEEMFSIARFIGVSRPGYELDGKHISAAMAELPDDALHLIEVPALAISSTDCRIRAEQSRPIWYLVPDGVVQYVAKRNLYRSEGEGVRP</sequence>
<keyword id="KW-0067">ATP-binding</keyword>
<keyword id="KW-0520">NAD</keyword>
<keyword id="KW-0547">Nucleotide-binding</keyword>
<keyword id="KW-0548">Nucleotidyltransferase</keyword>
<keyword id="KW-0662">Pyridine nucleotide biosynthesis</keyword>
<keyword id="KW-0808">Transferase</keyword>
<protein>
    <recommendedName>
        <fullName evidence="1">Probable nicotinate-nucleotide adenylyltransferase</fullName>
        <ecNumber evidence="1">2.7.7.18</ecNumber>
    </recommendedName>
    <alternativeName>
        <fullName evidence="1">Deamido-NAD(+) diphosphorylase</fullName>
    </alternativeName>
    <alternativeName>
        <fullName evidence="1">Deamido-NAD(+) pyrophosphorylase</fullName>
    </alternativeName>
    <alternativeName>
        <fullName evidence="1">Nicotinate mononucleotide adenylyltransferase</fullName>
        <shortName evidence="1">NaMN adenylyltransferase</shortName>
    </alternativeName>
</protein>
<proteinExistence type="inferred from homology"/>
<name>NADD_MYCVP</name>
<gene>
    <name evidence="1" type="primary">nadD</name>
    <name type="ordered locus">Mvan_3926</name>
</gene>
<feature type="chain" id="PRO_0000310126" description="Probable nicotinate-nucleotide adenylyltransferase">
    <location>
        <begin position="1"/>
        <end position="214"/>
    </location>
</feature>